<sequence>MDASAEQSLPEPGSQDSVAGDDIEIVVNVGGVRQVLYGDLLSQYPETRLAELINCLAGGYDTIFSLCDDYDPGKREFYFDRDPDAFKCVIEVYYFGEVHMKKGICPICFKNEMDFWKVDLKFLDDCCKSHLSEKREELEEIARRVQLILDDLGVDAAEGRWRRCQKCVWKFLEKPESSCPARVVAVLSFLLILVSSVVMCMGTIPELQVVDSEGNRVEHPTLENVETACIGWFTLEYLLRLFSSPNKLHFALSFMNIVDVLAILPFYVSLTLTHLGARMMELTNVQQAVQALRIMRIARIFKLARHSSGLQTLTYALKRSFKELGLLLMYLAVGIFVFSALGYTMEQSHPETLFKSIPQSFWWAIITMTTVGYGDIYPKTTLGKLNAAISFLCGVIAIALPIHPIINNFVRYYNKQRVLETAAKHELELMELNSSSAESKPGGSRSDLDTLPPEPAAREGPSWGSRLKLSHSDTFIPLLTEEKHHRTRLQSCK</sequence>
<protein>
    <recommendedName>
        <fullName evidence="8">Voltage-gated potassium channel regulatory subunit KCNF1</fullName>
    </recommendedName>
    <alternativeName>
        <fullName>Potassium voltage-gated channel subfamily F member 1</fullName>
    </alternativeName>
    <alternativeName>
        <fullName>Voltage-gated potassium channel subunit Kv5.1</fullName>
    </alternativeName>
</protein>
<organism>
    <name type="scientific">Rattus norvegicus</name>
    <name type="common">Rat</name>
    <dbReference type="NCBI Taxonomy" id="10116"/>
    <lineage>
        <taxon>Eukaryota</taxon>
        <taxon>Metazoa</taxon>
        <taxon>Chordata</taxon>
        <taxon>Craniata</taxon>
        <taxon>Vertebrata</taxon>
        <taxon>Euteleostomi</taxon>
        <taxon>Mammalia</taxon>
        <taxon>Eutheria</taxon>
        <taxon>Euarchontoglires</taxon>
        <taxon>Glires</taxon>
        <taxon>Rodentia</taxon>
        <taxon>Myomorpha</taxon>
        <taxon>Muroidea</taxon>
        <taxon>Muridae</taxon>
        <taxon>Murinae</taxon>
        <taxon>Rattus</taxon>
    </lineage>
</organism>
<keyword id="KW-1003">Cell membrane</keyword>
<keyword id="KW-0407">Ion channel</keyword>
<keyword id="KW-0406">Ion transport</keyword>
<keyword id="KW-0472">Membrane</keyword>
<keyword id="KW-0630">Potassium</keyword>
<keyword id="KW-0631">Potassium channel</keyword>
<keyword id="KW-0633">Potassium transport</keyword>
<keyword id="KW-1185">Reference proteome</keyword>
<keyword id="KW-0812">Transmembrane</keyword>
<keyword id="KW-1133">Transmembrane helix</keyword>
<keyword id="KW-0813">Transport</keyword>
<keyword id="KW-0851">Voltage-gated channel</keyword>
<accession>D4ADX7</accession>
<gene>
    <name evidence="11" type="primary">Kcnf1</name>
</gene>
<dbReference type="EMBL" id="M81783">
    <property type="status" value="NOT_ANNOTATED_CDS"/>
    <property type="molecule type" value="mRNA"/>
</dbReference>
<dbReference type="EMBL" id="AABR07063695">
    <property type="status" value="NOT_ANNOTATED_CDS"/>
    <property type="molecule type" value="Genomic_DNA"/>
</dbReference>
<dbReference type="SMR" id="D4ADX7"/>
<dbReference type="FunCoup" id="D4ADX7">
    <property type="interactions" value="30"/>
</dbReference>
<dbReference type="STRING" id="10116.ENSRNOP00000033496"/>
<dbReference type="PhosphoSitePlus" id="D4ADX7"/>
<dbReference type="PaxDb" id="10116-ENSRNOP00000033496"/>
<dbReference type="AGR" id="RGD:631414"/>
<dbReference type="RGD" id="631414">
    <property type="gene designation" value="Kcnf1"/>
</dbReference>
<dbReference type="eggNOG" id="KOG3713">
    <property type="taxonomic scope" value="Eukaryota"/>
</dbReference>
<dbReference type="HOGENOM" id="CLU_011722_4_1_1"/>
<dbReference type="OMA" id="FKCIIDV"/>
<dbReference type="OrthoDB" id="18966at9989"/>
<dbReference type="TreeFam" id="TF313103"/>
<dbReference type="Reactome" id="R-RNO-1296072">
    <property type="pathway name" value="Voltage gated Potassium channels"/>
</dbReference>
<dbReference type="Proteomes" id="UP000002494">
    <property type="component" value="Chromosome 6"/>
</dbReference>
<dbReference type="Bgee" id="ENSRNOG00000024310">
    <property type="expression patterns" value="Expressed in frontal cortex and 6 other cell types or tissues"/>
</dbReference>
<dbReference type="GO" id="GO:0097546">
    <property type="term" value="C:ciliary base"/>
    <property type="evidence" value="ECO:0000266"/>
    <property type="project" value="RGD"/>
</dbReference>
<dbReference type="GO" id="GO:0016020">
    <property type="term" value="C:membrane"/>
    <property type="evidence" value="ECO:0000318"/>
    <property type="project" value="GO_Central"/>
</dbReference>
<dbReference type="GO" id="GO:0008076">
    <property type="term" value="C:voltage-gated potassium channel complex"/>
    <property type="evidence" value="ECO:0000314"/>
    <property type="project" value="UniProtKB"/>
</dbReference>
<dbReference type="GO" id="GO:0015459">
    <property type="term" value="F:potassium channel regulator activity"/>
    <property type="evidence" value="ECO:0000314"/>
    <property type="project" value="UniProtKB"/>
</dbReference>
<dbReference type="GO" id="GO:0005249">
    <property type="term" value="F:voltage-gated potassium channel activity"/>
    <property type="evidence" value="ECO:0007669"/>
    <property type="project" value="InterPro"/>
</dbReference>
<dbReference type="GO" id="GO:0001508">
    <property type="term" value="P:action potential"/>
    <property type="evidence" value="ECO:0000318"/>
    <property type="project" value="GO_Central"/>
</dbReference>
<dbReference type="GO" id="GO:1905515">
    <property type="term" value="P:non-motile cilium assembly"/>
    <property type="evidence" value="ECO:0000266"/>
    <property type="project" value="RGD"/>
</dbReference>
<dbReference type="GO" id="GO:0071805">
    <property type="term" value="P:potassium ion transmembrane transport"/>
    <property type="evidence" value="ECO:0000318"/>
    <property type="project" value="GO_Central"/>
</dbReference>
<dbReference type="GO" id="GO:0006813">
    <property type="term" value="P:potassium ion transport"/>
    <property type="evidence" value="ECO:0000314"/>
    <property type="project" value="UniProtKB"/>
</dbReference>
<dbReference type="GO" id="GO:0051260">
    <property type="term" value="P:protein homooligomerization"/>
    <property type="evidence" value="ECO:0007669"/>
    <property type="project" value="InterPro"/>
</dbReference>
<dbReference type="GO" id="GO:0043266">
    <property type="term" value="P:regulation of potassium ion transport"/>
    <property type="evidence" value="ECO:0000314"/>
    <property type="project" value="UniProtKB"/>
</dbReference>
<dbReference type="CDD" id="cd18381">
    <property type="entry name" value="BTB_POZ_Kv5_KCNF1"/>
    <property type="match status" value="1"/>
</dbReference>
<dbReference type="FunFam" id="1.20.120.350:FF:000046">
    <property type="entry name" value="Potassium voltage-gated channel subfamily F member 1"/>
    <property type="match status" value="1"/>
</dbReference>
<dbReference type="FunFam" id="3.30.710.10:FF:000072">
    <property type="entry name" value="Potassium voltage-gated channel subfamily F member 1"/>
    <property type="match status" value="1"/>
</dbReference>
<dbReference type="FunFam" id="1.10.287.70:FF:000005">
    <property type="entry name" value="potassium voltage-gated channel subfamily G member 1"/>
    <property type="match status" value="1"/>
</dbReference>
<dbReference type="Gene3D" id="1.10.287.70">
    <property type="match status" value="1"/>
</dbReference>
<dbReference type="Gene3D" id="3.30.710.10">
    <property type="entry name" value="Potassium Channel Kv1.1, Chain A"/>
    <property type="match status" value="1"/>
</dbReference>
<dbReference type="Gene3D" id="1.20.120.350">
    <property type="entry name" value="Voltage-gated potassium channels. Chain C"/>
    <property type="match status" value="1"/>
</dbReference>
<dbReference type="InterPro" id="IPR005821">
    <property type="entry name" value="Ion_trans_dom"/>
</dbReference>
<dbReference type="InterPro" id="IPR003968">
    <property type="entry name" value="K_chnl_volt-dep_Kv"/>
</dbReference>
<dbReference type="InterPro" id="IPR003971">
    <property type="entry name" value="K_chnl_volt-dep_Kv5/Kv9"/>
</dbReference>
<dbReference type="InterPro" id="IPR048010">
    <property type="entry name" value="KCNF1-like_BTB_POZ"/>
</dbReference>
<dbReference type="InterPro" id="IPR011333">
    <property type="entry name" value="SKP1/BTB/POZ_sf"/>
</dbReference>
<dbReference type="InterPro" id="IPR003131">
    <property type="entry name" value="T1-type_BTB"/>
</dbReference>
<dbReference type="InterPro" id="IPR028325">
    <property type="entry name" value="VG_K_chnl"/>
</dbReference>
<dbReference type="InterPro" id="IPR027359">
    <property type="entry name" value="Volt_channel_dom_sf"/>
</dbReference>
<dbReference type="PANTHER" id="PTHR11537:SF171">
    <property type="entry name" value="POTASSIUM VOLTAGE-GATED CHANNEL SUBFAMILY F MEMBER 1"/>
    <property type="match status" value="1"/>
</dbReference>
<dbReference type="PANTHER" id="PTHR11537">
    <property type="entry name" value="VOLTAGE-GATED POTASSIUM CHANNEL"/>
    <property type="match status" value="1"/>
</dbReference>
<dbReference type="Pfam" id="PF02214">
    <property type="entry name" value="BTB_2"/>
    <property type="match status" value="1"/>
</dbReference>
<dbReference type="Pfam" id="PF00520">
    <property type="entry name" value="Ion_trans"/>
    <property type="match status" value="1"/>
</dbReference>
<dbReference type="PRINTS" id="PR00169">
    <property type="entry name" value="KCHANNEL"/>
</dbReference>
<dbReference type="PRINTS" id="PR01494">
    <property type="entry name" value="KV9CHANNEL"/>
</dbReference>
<dbReference type="PRINTS" id="PR01491">
    <property type="entry name" value="KVCHANNEL"/>
</dbReference>
<dbReference type="SUPFAM" id="SSF54695">
    <property type="entry name" value="POZ domain"/>
    <property type="match status" value="1"/>
</dbReference>
<dbReference type="SUPFAM" id="SSF81324">
    <property type="entry name" value="Voltage-gated potassium channels"/>
    <property type="match status" value="1"/>
</dbReference>
<feature type="chain" id="PRO_0000460743" description="Voltage-gated potassium channel regulatory subunit KCNF1">
    <location>
        <begin position="1"/>
        <end position="493"/>
    </location>
</feature>
<feature type="topological domain" description="Cytoplasmic" evidence="8">
    <location>
        <begin position="1"/>
        <end position="183"/>
    </location>
</feature>
<feature type="transmembrane region" description="Helical; Name=Segment S1" evidence="3">
    <location>
        <begin position="184"/>
        <end position="204"/>
    </location>
</feature>
<feature type="topological domain" description="Extracellular" evidence="8">
    <location>
        <begin position="205"/>
        <end position="223"/>
    </location>
</feature>
<feature type="transmembrane region" description="Helical; Name=Segment S2" evidence="3">
    <location>
        <begin position="224"/>
        <end position="244"/>
    </location>
</feature>
<feature type="topological domain" description="Cytoplasmic" evidence="8">
    <location>
        <begin position="245"/>
        <end position="249"/>
    </location>
</feature>
<feature type="transmembrane region" description="Helical; Name=Segment S3" evidence="3">
    <location>
        <begin position="250"/>
        <end position="270"/>
    </location>
</feature>
<feature type="topological domain" description="Extracellular" evidence="8">
    <location>
        <begin position="271"/>
        <end position="289"/>
    </location>
</feature>
<feature type="transmembrane region" description="Helical; Voltage-sensor; Name=Segment S4" evidence="3">
    <location>
        <begin position="290"/>
        <end position="310"/>
    </location>
</feature>
<feature type="topological domain" description="Cytoplasmic" evidence="8">
    <location>
        <begin position="311"/>
        <end position="324"/>
    </location>
</feature>
<feature type="transmembrane region" description="Helical; Name=Segment S5" evidence="3">
    <location>
        <begin position="325"/>
        <end position="345"/>
    </location>
</feature>
<feature type="topological domain" description="Extracellular" evidence="8">
    <location>
        <begin position="346"/>
        <end position="357"/>
    </location>
</feature>
<feature type="intramembrane region" description="Pore-forming; Name=Segment H5" evidence="3">
    <location>
        <begin position="358"/>
        <end position="378"/>
    </location>
</feature>
<feature type="topological domain" description="Extracellular" evidence="8">
    <location>
        <begin position="379"/>
        <end position="385"/>
    </location>
</feature>
<feature type="transmembrane region" description="Helical; Name=Segment S6" evidence="3">
    <location>
        <begin position="386"/>
        <end position="406"/>
    </location>
</feature>
<feature type="topological domain" description="Cytoplasmic" evidence="8">
    <location>
        <begin position="407"/>
        <end position="493"/>
    </location>
</feature>
<feature type="region of interest" description="Disordered" evidence="4">
    <location>
        <begin position="433"/>
        <end position="468"/>
    </location>
</feature>
<feature type="short sequence motif" description="Selectivity filter" evidence="1">
    <location>
        <begin position="370"/>
        <end position="375"/>
    </location>
</feature>
<feature type="sequence conflict" description="In Ref. 1; M81783." evidence="8" ref="1">
    <original>VD</original>
    <variation>SS</variation>
    <location>
        <begin position="154"/>
        <end position="155"/>
    </location>
</feature>
<feature type="sequence conflict" description="In Ref. 1; M81783." evidence="8" ref="1">
    <original>L</original>
    <variation>V</variation>
    <location>
        <position position="239"/>
    </location>
</feature>
<feature type="sequence conflict" description="In Ref. 1; M81783." evidence="8" ref="1">
    <original>H</original>
    <variation>Q</variation>
    <location>
        <position position="349"/>
    </location>
</feature>
<feature type="sequence conflict" description="In Ref. 1; M81783." evidence="8" ref="1">
    <original>G</original>
    <variation>A</variation>
    <location>
        <position position="443"/>
    </location>
</feature>
<comment type="function">
    <text evidence="6 7">Regulatory alpha-subunit of the voltage-gated potassium (Kv) channel which, when coassembled with KCNB1 or KCNB2, can modulate their expression and their gating kinetics by acting on deactivation upon repolarization and inactivation during maintained depolarization (PubMed:9305895, PubMed:9696692). Accelerates inactivation but has relatively little effect on deactivation (PubMed:9696692). Coexpression with KCNB1 or KCNB2 markedly slows inactivation (PubMed:9305895). Each modulatory subunit has its own specific properties of regulation, and can lead to extensive inhibitions, to large changes in kinetics, and/or to large shifts in the voltage dependencies of the inactivation process (PubMed:9305895). The gating kinetics depends on the nature and stoichiometry of the associated regulatory sunbunit (PubMed:9305895, PubMed:9696692). Fails to produce a potassium current when expressed alone (PubMed:9305895).</text>
</comment>
<comment type="subunit">
    <text evidence="9 10">Heterotetramer with KCNB1 or KCNB2.</text>
</comment>
<comment type="subcellular location">
    <subcellularLocation>
        <location evidence="2">Cell membrane</location>
        <topology evidence="3">Multi-pass membrane protein</topology>
    </subcellularLocation>
</comment>
<comment type="tissue specificity">
    <text evidence="5">Expressed in brain namely in the piriform cortex, olfactory tubercle, and medial habenular nucleus (PubMed:1740690). Also expressed in the medial amygdaloid nuclei and the lateral amygdaloid area (PubMed:1740690).</text>
</comment>
<comment type="similarity">
    <text evidence="8">Belongs to the potassium channel family. F (TC 1.A.1.2) subfamily. Kv5.1/KCNF1 sub-subfamily.</text>
</comment>
<proteinExistence type="evidence at protein level"/>
<name>KCNF1_RAT</name>
<reference key="1">
    <citation type="journal article" date="1992" name="J. Neurosci.">
        <title>Distinct spatial and temporal expression patterns of K+ channel mRNAs from different subfamilies.</title>
        <authorList>
            <person name="Drewe J.A."/>
            <person name="Verma S."/>
            <person name="Frech G.C."/>
            <person name="Joho R.H."/>
        </authorList>
    </citation>
    <scope>NUCLEOTIDE SEQUENCE [MRNA]</scope>
    <scope>TISSUE SPECIFICITY</scope>
</reference>
<reference key="2">
    <citation type="journal article" date="2004" name="Nature">
        <title>Genome sequence of the Brown Norway rat yields insights into mammalian evolution.</title>
        <authorList>
            <person name="Gibbs R.A."/>
            <person name="Weinstock G.M."/>
            <person name="Metzker M.L."/>
            <person name="Muzny D.M."/>
            <person name="Sodergren E.J."/>
            <person name="Scherer S."/>
            <person name="Scott G."/>
            <person name="Steffen D."/>
            <person name="Worley K.C."/>
            <person name="Burch P.E."/>
            <person name="Okwuonu G."/>
            <person name="Hines S."/>
            <person name="Lewis L."/>
            <person name="Deramo C."/>
            <person name="Delgado O."/>
            <person name="Dugan-Rocha S."/>
            <person name="Miner G."/>
            <person name="Morgan M."/>
            <person name="Hawes A."/>
            <person name="Gill R."/>
            <person name="Holt R.A."/>
            <person name="Adams M.D."/>
            <person name="Amanatides P.G."/>
            <person name="Baden-Tillson H."/>
            <person name="Barnstead M."/>
            <person name="Chin S."/>
            <person name="Evans C.A."/>
            <person name="Ferriera S."/>
            <person name="Fosler C."/>
            <person name="Glodek A."/>
            <person name="Gu Z."/>
            <person name="Jennings D."/>
            <person name="Kraft C.L."/>
            <person name="Nguyen T."/>
            <person name="Pfannkoch C.M."/>
            <person name="Sitter C."/>
            <person name="Sutton G.G."/>
            <person name="Venter J.C."/>
            <person name="Woodage T."/>
            <person name="Smith D."/>
            <person name="Lee H.-M."/>
            <person name="Gustafson E."/>
            <person name="Cahill P."/>
            <person name="Kana A."/>
            <person name="Doucette-Stamm L."/>
            <person name="Weinstock K."/>
            <person name="Fechtel K."/>
            <person name="Weiss R.B."/>
            <person name="Dunn D.M."/>
            <person name="Green E.D."/>
            <person name="Blakesley R.W."/>
            <person name="Bouffard G.G."/>
            <person name="De Jong P.J."/>
            <person name="Osoegawa K."/>
            <person name="Zhu B."/>
            <person name="Marra M."/>
            <person name="Schein J."/>
            <person name="Bosdet I."/>
            <person name="Fjell C."/>
            <person name="Jones S."/>
            <person name="Krzywinski M."/>
            <person name="Mathewson C."/>
            <person name="Siddiqui A."/>
            <person name="Wye N."/>
            <person name="McPherson J."/>
            <person name="Zhao S."/>
            <person name="Fraser C.M."/>
            <person name="Shetty J."/>
            <person name="Shatsman S."/>
            <person name="Geer K."/>
            <person name="Chen Y."/>
            <person name="Abramzon S."/>
            <person name="Nierman W.C."/>
            <person name="Havlak P.H."/>
            <person name="Chen R."/>
            <person name="Durbin K.J."/>
            <person name="Egan A."/>
            <person name="Ren Y."/>
            <person name="Song X.-Z."/>
            <person name="Li B."/>
            <person name="Liu Y."/>
            <person name="Qin X."/>
            <person name="Cawley S."/>
            <person name="Cooney A.J."/>
            <person name="D'Souza L.M."/>
            <person name="Martin K."/>
            <person name="Wu J.Q."/>
            <person name="Gonzalez-Garay M.L."/>
            <person name="Jackson A.R."/>
            <person name="Kalafus K.J."/>
            <person name="McLeod M.P."/>
            <person name="Milosavljevic A."/>
            <person name="Virk D."/>
            <person name="Volkov A."/>
            <person name="Wheeler D.A."/>
            <person name="Zhang Z."/>
            <person name="Bailey J.A."/>
            <person name="Eichler E.E."/>
            <person name="Tuzun E."/>
            <person name="Birney E."/>
            <person name="Mongin E."/>
            <person name="Ureta-Vidal A."/>
            <person name="Woodwark C."/>
            <person name="Zdobnov E."/>
            <person name="Bork P."/>
            <person name="Suyama M."/>
            <person name="Torrents D."/>
            <person name="Alexandersson M."/>
            <person name="Trask B.J."/>
            <person name="Young J.M."/>
            <person name="Huang H."/>
            <person name="Wang H."/>
            <person name="Xing H."/>
            <person name="Daniels S."/>
            <person name="Gietzen D."/>
            <person name="Schmidt J."/>
            <person name="Stevens K."/>
            <person name="Vitt U."/>
            <person name="Wingrove J."/>
            <person name="Camara F."/>
            <person name="Mar Alba M."/>
            <person name="Abril J.F."/>
            <person name="Guigo R."/>
            <person name="Smit A."/>
            <person name="Dubchak I."/>
            <person name="Rubin E.M."/>
            <person name="Couronne O."/>
            <person name="Poliakov A."/>
            <person name="Huebner N."/>
            <person name="Ganten D."/>
            <person name="Goesele C."/>
            <person name="Hummel O."/>
            <person name="Kreitler T."/>
            <person name="Lee Y.-A."/>
            <person name="Monti J."/>
            <person name="Schulz H."/>
            <person name="Zimdahl H."/>
            <person name="Himmelbauer H."/>
            <person name="Lehrach H."/>
            <person name="Jacob H.J."/>
            <person name="Bromberg S."/>
            <person name="Gullings-Handley J."/>
            <person name="Jensen-Seaman M.I."/>
            <person name="Kwitek A.E."/>
            <person name="Lazar J."/>
            <person name="Pasko D."/>
            <person name="Tonellato P.J."/>
            <person name="Twigger S."/>
            <person name="Ponting C.P."/>
            <person name="Duarte J.M."/>
            <person name="Rice S."/>
            <person name="Goodstadt L."/>
            <person name="Beatson S.A."/>
            <person name="Emes R.D."/>
            <person name="Winter E.E."/>
            <person name="Webber C."/>
            <person name="Brandt P."/>
            <person name="Nyakatura G."/>
            <person name="Adetobi M."/>
            <person name="Chiaromonte F."/>
            <person name="Elnitski L."/>
            <person name="Eswara P."/>
            <person name="Hardison R.C."/>
            <person name="Hou M."/>
            <person name="Kolbe D."/>
            <person name="Makova K."/>
            <person name="Miller W."/>
            <person name="Nekrutenko A."/>
            <person name="Riemer C."/>
            <person name="Schwartz S."/>
            <person name="Taylor J."/>
            <person name="Yang S."/>
            <person name="Zhang Y."/>
            <person name="Lindpaintner K."/>
            <person name="Andrews T.D."/>
            <person name="Caccamo M."/>
            <person name="Clamp M."/>
            <person name="Clarke L."/>
            <person name="Curwen V."/>
            <person name="Durbin R.M."/>
            <person name="Eyras E."/>
            <person name="Searle S.M."/>
            <person name="Cooper G.M."/>
            <person name="Batzoglou S."/>
            <person name="Brudno M."/>
            <person name="Sidow A."/>
            <person name="Stone E.A."/>
            <person name="Payseur B.A."/>
            <person name="Bourque G."/>
            <person name="Lopez-Otin C."/>
            <person name="Puente X.S."/>
            <person name="Chakrabarti K."/>
            <person name="Chatterji S."/>
            <person name="Dewey C."/>
            <person name="Pachter L."/>
            <person name="Bray N."/>
            <person name="Yap V.B."/>
            <person name="Caspi A."/>
            <person name="Tesler G."/>
            <person name="Pevzner P.A."/>
            <person name="Haussler D."/>
            <person name="Roskin K.M."/>
            <person name="Baertsch R."/>
            <person name="Clawson H."/>
            <person name="Furey T.S."/>
            <person name="Hinrichs A.S."/>
            <person name="Karolchik D."/>
            <person name="Kent W.J."/>
            <person name="Rosenbloom K.R."/>
            <person name="Trumbower H."/>
            <person name="Weirauch M."/>
            <person name="Cooper D.N."/>
            <person name="Stenson P.D."/>
            <person name="Ma B."/>
            <person name="Brent M."/>
            <person name="Arumugam M."/>
            <person name="Shteynberg D."/>
            <person name="Copley R.R."/>
            <person name="Taylor M.S."/>
            <person name="Riethman H."/>
            <person name="Mudunuri U."/>
            <person name="Peterson J."/>
            <person name="Guyer M."/>
            <person name="Felsenfeld A."/>
            <person name="Old S."/>
            <person name="Mockrin S."/>
            <person name="Collins F.S."/>
        </authorList>
    </citation>
    <scope>NUCLEOTIDE SEQUENCE [LARGE SCALE GENOMIC DNA]</scope>
    <source>
        <strain>Brown Norway</strain>
    </source>
</reference>
<reference key="3">
    <citation type="journal article" date="1997" name="J. Biol. Chem.">
        <title>New modulatory alpha subunits for mammalian Shab K+ channels.</title>
        <authorList>
            <person name="Salinas M."/>
            <person name="Duprat F."/>
            <person name="Heurteaux C."/>
            <person name="Hugnot J.-P."/>
            <person name="Lazdunski M."/>
        </authorList>
    </citation>
    <scope>FUNCTION</scope>
    <scope>SUBUNIT</scope>
</reference>
<reference key="4">
    <citation type="journal article" date="1998" name="Am. J. Physiol.">
        <title>Modulation of potassium channel gating by coexpression of Kv2.1 with regulatory Kv5.1 or Kv6.1 alpha-subunits.</title>
        <authorList>
            <person name="Kramer J.W."/>
            <person name="Post M.A."/>
            <person name="Brown A.M."/>
            <person name="Kirsch G.E."/>
        </authorList>
    </citation>
    <scope>FUNCTION</scope>
    <scope>SUBUNIT</scope>
</reference>
<evidence type="ECO:0000250" key="1">
    <source>
        <dbReference type="UniProtKB" id="P63142"/>
    </source>
</evidence>
<evidence type="ECO:0000250" key="2">
    <source>
        <dbReference type="UniProtKB" id="Q14721"/>
    </source>
</evidence>
<evidence type="ECO:0000255" key="3"/>
<evidence type="ECO:0000256" key="4">
    <source>
        <dbReference type="SAM" id="MobiDB-lite"/>
    </source>
</evidence>
<evidence type="ECO:0000269" key="5">
    <source>
    </source>
</evidence>
<evidence type="ECO:0000269" key="6">
    <source>
    </source>
</evidence>
<evidence type="ECO:0000269" key="7">
    <source>
    </source>
</evidence>
<evidence type="ECO:0000305" key="8"/>
<evidence type="ECO:0000305" key="9">
    <source>
    </source>
</evidence>
<evidence type="ECO:0000305" key="10">
    <source>
    </source>
</evidence>
<evidence type="ECO:0000312" key="11">
    <source>
        <dbReference type="RGD" id="631414"/>
    </source>
</evidence>